<dbReference type="EC" id="3.-.-.-"/>
<dbReference type="EMBL" id="AL163816">
    <property type="protein sequence ID" value="CAB87746.1"/>
    <property type="molecule type" value="Genomic_DNA"/>
</dbReference>
<dbReference type="EMBL" id="CP002686">
    <property type="protein sequence ID" value="AEE80423.1"/>
    <property type="molecule type" value="Genomic_DNA"/>
</dbReference>
<dbReference type="EMBL" id="AK228182">
    <property type="protein sequence ID" value="BAF00137.1"/>
    <property type="molecule type" value="mRNA"/>
</dbReference>
<dbReference type="EMBL" id="BT028997">
    <property type="protein sequence ID" value="ABI93906.1"/>
    <property type="molecule type" value="mRNA"/>
</dbReference>
<dbReference type="PIR" id="T48090">
    <property type="entry name" value="T48090"/>
</dbReference>
<dbReference type="RefSeq" id="NP_191860.1">
    <property type="nucleotide sequence ID" value="NM_116166.5"/>
</dbReference>
<dbReference type="SMR" id="Q9LYC1"/>
<dbReference type="BioGRID" id="10790">
    <property type="interactions" value="17"/>
</dbReference>
<dbReference type="DIP" id="DIP-37662N"/>
<dbReference type="FunCoup" id="Q9LYC1">
    <property type="interactions" value="526"/>
</dbReference>
<dbReference type="IntAct" id="Q9LYC1">
    <property type="interactions" value="17"/>
</dbReference>
<dbReference type="STRING" id="3702.Q9LYC1"/>
<dbReference type="ESTHER" id="arath-GID1B">
    <property type="family name" value="Plant_carboxylesterase"/>
</dbReference>
<dbReference type="PaxDb" id="3702-AT3G63010.1"/>
<dbReference type="ProteomicsDB" id="222261"/>
<dbReference type="EnsemblPlants" id="AT3G63010.1">
    <property type="protein sequence ID" value="AT3G63010.1"/>
    <property type="gene ID" value="AT3G63010"/>
</dbReference>
<dbReference type="GeneID" id="825476"/>
<dbReference type="Gramene" id="AT3G63010.1">
    <property type="protein sequence ID" value="AT3G63010.1"/>
    <property type="gene ID" value="AT3G63010"/>
</dbReference>
<dbReference type="KEGG" id="ath:AT3G63010"/>
<dbReference type="Araport" id="AT3G63010"/>
<dbReference type="TAIR" id="AT3G63010">
    <property type="gene designation" value="GID1B"/>
</dbReference>
<dbReference type="eggNOG" id="KOG1515">
    <property type="taxonomic scope" value="Eukaryota"/>
</dbReference>
<dbReference type="HOGENOM" id="CLU_012494_22_1_1"/>
<dbReference type="InParanoid" id="Q9LYC1"/>
<dbReference type="OMA" id="HFHCLME"/>
<dbReference type="OrthoDB" id="408631at2759"/>
<dbReference type="PhylomeDB" id="Q9LYC1"/>
<dbReference type="BioCyc" id="ARA:AT3G63010-MONOMER"/>
<dbReference type="PRO" id="PR:Q9LYC1"/>
<dbReference type="Proteomes" id="UP000006548">
    <property type="component" value="Chromosome 3"/>
</dbReference>
<dbReference type="ExpressionAtlas" id="Q9LYC1">
    <property type="expression patterns" value="baseline and differential"/>
</dbReference>
<dbReference type="GO" id="GO:0005634">
    <property type="term" value="C:nucleus"/>
    <property type="evidence" value="ECO:0007669"/>
    <property type="project" value="UniProtKB-SubCell"/>
</dbReference>
<dbReference type="GO" id="GO:0016787">
    <property type="term" value="F:hydrolase activity"/>
    <property type="evidence" value="ECO:0007669"/>
    <property type="project" value="UniProtKB-KW"/>
</dbReference>
<dbReference type="GO" id="GO:0048444">
    <property type="term" value="P:floral organ morphogenesis"/>
    <property type="evidence" value="ECO:0000316"/>
    <property type="project" value="TAIR"/>
</dbReference>
<dbReference type="GO" id="GO:0048530">
    <property type="term" value="P:fruit morphogenesis"/>
    <property type="evidence" value="ECO:0000316"/>
    <property type="project" value="CAFA"/>
</dbReference>
<dbReference type="GO" id="GO:0010476">
    <property type="term" value="P:gibberellin mediated signaling pathway"/>
    <property type="evidence" value="ECO:0000316"/>
    <property type="project" value="TAIR"/>
</dbReference>
<dbReference type="GO" id="GO:0010629">
    <property type="term" value="P:negative regulation of gene expression"/>
    <property type="evidence" value="ECO:0000316"/>
    <property type="project" value="CAFA"/>
</dbReference>
<dbReference type="GO" id="GO:1905516">
    <property type="term" value="P:positive regulation of fertilization"/>
    <property type="evidence" value="ECO:0000316"/>
    <property type="project" value="CAFA"/>
</dbReference>
<dbReference type="GO" id="GO:0009939">
    <property type="term" value="P:positive regulation of gibberellic acid mediated signaling pathway"/>
    <property type="evidence" value="ECO:0000316"/>
    <property type="project" value="TAIR"/>
</dbReference>
<dbReference type="GO" id="GO:0009739">
    <property type="term" value="P:response to gibberellin"/>
    <property type="evidence" value="ECO:0000316"/>
    <property type="project" value="TAIR"/>
</dbReference>
<dbReference type="FunFam" id="3.40.50.1820:FF:000087">
    <property type="entry name" value="Gibberellin receptor GID1"/>
    <property type="match status" value="1"/>
</dbReference>
<dbReference type="Gene3D" id="3.40.50.1820">
    <property type="entry name" value="alpha/beta hydrolase"/>
    <property type="match status" value="1"/>
</dbReference>
<dbReference type="InterPro" id="IPR013094">
    <property type="entry name" value="AB_hydrolase_3"/>
</dbReference>
<dbReference type="InterPro" id="IPR029058">
    <property type="entry name" value="AB_hydrolase_fold"/>
</dbReference>
<dbReference type="InterPro" id="IPR050466">
    <property type="entry name" value="Carboxylest/Gibb_receptor"/>
</dbReference>
<dbReference type="InterPro" id="IPR002168">
    <property type="entry name" value="Lipase_GDXG_HIS_AS"/>
</dbReference>
<dbReference type="InterPro" id="IPR033140">
    <property type="entry name" value="Lipase_GDXG_put_SER_AS"/>
</dbReference>
<dbReference type="PANTHER" id="PTHR23024">
    <property type="entry name" value="ARYLACETAMIDE DEACETYLASE"/>
    <property type="match status" value="1"/>
</dbReference>
<dbReference type="PANTHER" id="PTHR23024:SF98">
    <property type="entry name" value="GIBBERELLIN RECEPTOR GID1B"/>
    <property type="match status" value="1"/>
</dbReference>
<dbReference type="Pfam" id="PF07859">
    <property type="entry name" value="Abhydrolase_3"/>
    <property type="match status" value="1"/>
</dbReference>
<dbReference type="SUPFAM" id="SSF53474">
    <property type="entry name" value="alpha/beta-Hydrolases"/>
    <property type="match status" value="1"/>
</dbReference>
<dbReference type="PROSITE" id="PS01173">
    <property type="entry name" value="LIPASE_GDXG_HIS"/>
    <property type="match status" value="1"/>
</dbReference>
<dbReference type="PROSITE" id="PS01174">
    <property type="entry name" value="LIPASE_GDXG_SER"/>
    <property type="match status" value="1"/>
</dbReference>
<reference key="1">
    <citation type="journal article" date="2000" name="Nature">
        <title>Sequence and analysis of chromosome 3 of the plant Arabidopsis thaliana.</title>
        <authorList>
            <person name="Salanoubat M."/>
            <person name="Lemcke K."/>
            <person name="Rieger M."/>
            <person name="Ansorge W."/>
            <person name="Unseld M."/>
            <person name="Fartmann B."/>
            <person name="Valle G."/>
            <person name="Bloecker H."/>
            <person name="Perez-Alonso M."/>
            <person name="Obermaier B."/>
            <person name="Delseny M."/>
            <person name="Boutry M."/>
            <person name="Grivell L.A."/>
            <person name="Mache R."/>
            <person name="Puigdomenech P."/>
            <person name="De Simone V."/>
            <person name="Choisne N."/>
            <person name="Artiguenave F."/>
            <person name="Robert C."/>
            <person name="Brottier P."/>
            <person name="Wincker P."/>
            <person name="Cattolico L."/>
            <person name="Weissenbach J."/>
            <person name="Saurin W."/>
            <person name="Quetier F."/>
            <person name="Schaefer M."/>
            <person name="Mueller-Auer S."/>
            <person name="Gabel C."/>
            <person name="Fuchs M."/>
            <person name="Benes V."/>
            <person name="Wurmbach E."/>
            <person name="Drzonek H."/>
            <person name="Erfle H."/>
            <person name="Jordan N."/>
            <person name="Bangert S."/>
            <person name="Wiedelmann R."/>
            <person name="Kranz H."/>
            <person name="Voss H."/>
            <person name="Holland R."/>
            <person name="Brandt P."/>
            <person name="Nyakatura G."/>
            <person name="Vezzi A."/>
            <person name="D'Angelo M."/>
            <person name="Pallavicini A."/>
            <person name="Toppo S."/>
            <person name="Simionati B."/>
            <person name="Conrad A."/>
            <person name="Hornischer K."/>
            <person name="Kauer G."/>
            <person name="Loehnert T.-H."/>
            <person name="Nordsiek G."/>
            <person name="Reichelt J."/>
            <person name="Scharfe M."/>
            <person name="Schoen O."/>
            <person name="Bargues M."/>
            <person name="Terol J."/>
            <person name="Climent J."/>
            <person name="Navarro P."/>
            <person name="Collado C."/>
            <person name="Perez-Perez A."/>
            <person name="Ottenwaelder B."/>
            <person name="Duchemin D."/>
            <person name="Cooke R."/>
            <person name="Laudie M."/>
            <person name="Berger-Llauro C."/>
            <person name="Purnelle B."/>
            <person name="Masuy D."/>
            <person name="de Haan M."/>
            <person name="Maarse A.C."/>
            <person name="Alcaraz J.-P."/>
            <person name="Cottet A."/>
            <person name="Casacuberta E."/>
            <person name="Monfort A."/>
            <person name="Argiriou A."/>
            <person name="Flores M."/>
            <person name="Liguori R."/>
            <person name="Vitale D."/>
            <person name="Mannhaupt G."/>
            <person name="Haase D."/>
            <person name="Schoof H."/>
            <person name="Rudd S."/>
            <person name="Zaccaria P."/>
            <person name="Mewes H.-W."/>
            <person name="Mayer K.F.X."/>
            <person name="Kaul S."/>
            <person name="Town C.D."/>
            <person name="Koo H.L."/>
            <person name="Tallon L.J."/>
            <person name="Jenkins J."/>
            <person name="Rooney T."/>
            <person name="Rizzo M."/>
            <person name="Walts A."/>
            <person name="Utterback T."/>
            <person name="Fujii C.Y."/>
            <person name="Shea T.P."/>
            <person name="Creasy T.H."/>
            <person name="Haas B."/>
            <person name="Maiti R."/>
            <person name="Wu D."/>
            <person name="Peterson J."/>
            <person name="Van Aken S."/>
            <person name="Pai G."/>
            <person name="Militscher J."/>
            <person name="Sellers P."/>
            <person name="Gill J.E."/>
            <person name="Feldblyum T.V."/>
            <person name="Preuss D."/>
            <person name="Lin X."/>
            <person name="Nierman W.C."/>
            <person name="Salzberg S.L."/>
            <person name="White O."/>
            <person name="Venter J.C."/>
            <person name="Fraser C.M."/>
            <person name="Kaneko T."/>
            <person name="Nakamura Y."/>
            <person name="Sato S."/>
            <person name="Kato T."/>
            <person name="Asamizu E."/>
            <person name="Sasamoto S."/>
            <person name="Kimura T."/>
            <person name="Idesawa K."/>
            <person name="Kawashima K."/>
            <person name="Kishida Y."/>
            <person name="Kiyokawa C."/>
            <person name="Kohara M."/>
            <person name="Matsumoto M."/>
            <person name="Matsuno A."/>
            <person name="Muraki A."/>
            <person name="Nakayama S."/>
            <person name="Nakazaki N."/>
            <person name="Shinpo S."/>
            <person name="Takeuchi C."/>
            <person name="Wada T."/>
            <person name="Watanabe A."/>
            <person name="Yamada M."/>
            <person name="Yasuda M."/>
            <person name="Tabata S."/>
        </authorList>
    </citation>
    <scope>NUCLEOTIDE SEQUENCE [LARGE SCALE GENOMIC DNA]</scope>
    <source>
        <strain>cv. Columbia</strain>
    </source>
</reference>
<reference key="2">
    <citation type="journal article" date="2017" name="Plant J.">
        <title>Araport11: a complete reannotation of the Arabidopsis thaliana reference genome.</title>
        <authorList>
            <person name="Cheng C.Y."/>
            <person name="Krishnakumar V."/>
            <person name="Chan A.P."/>
            <person name="Thibaud-Nissen F."/>
            <person name="Schobel S."/>
            <person name="Town C.D."/>
        </authorList>
    </citation>
    <scope>GENOME REANNOTATION</scope>
    <source>
        <strain>cv. Columbia</strain>
    </source>
</reference>
<reference key="3">
    <citation type="submission" date="2006-07" db="EMBL/GenBank/DDBJ databases">
        <title>Large-scale analysis of RIKEN Arabidopsis full-length (RAFL) cDNAs.</title>
        <authorList>
            <person name="Totoki Y."/>
            <person name="Seki M."/>
            <person name="Ishida J."/>
            <person name="Nakajima M."/>
            <person name="Enju A."/>
            <person name="Kamiya A."/>
            <person name="Narusaka M."/>
            <person name="Shin-i T."/>
            <person name="Nakagawa M."/>
            <person name="Sakamoto N."/>
            <person name="Oishi K."/>
            <person name="Kohara Y."/>
            <person name="Kobayashi M."/>
            <person name="Toyoda A."/>
            <person name="Sakaki Y."/>
            <person name="Sakurai T."/>
            <person name="Iida K."/>
            <person name="Akiyama K."/>
            <person name="Satou M."/>
            <person name="Toyoda T."/>
            <person name="Konagaya A."/>
            <person name="Carninci P."/>
            <person name="Kawai J."/>
            <person name="Hayashizaki Y."/>
            <person name="Shinozaki K."/>
        </authorList>
    </citation>
    <scope>NUCLEOTIDE SEQUENCE [LARGE SCALE MRNA]</scope>
    <source>
        <strain>cv. Columbia</strain>
    </source>
</reference>
<reference key="4">
    <citation type="submission" date="2006-09" db="EMBL/GenBank/DDBJ databases">
        <title>Arabidopsis ORF clones.</title>
        <authorList>
            <person name="Bautista V.R."/>
            <person name="Kim C.J."/>
            <person name="Chen H."/>
            <person name="Quinitio C."/>
            <person name="Ecker J.R."/>
        </authorList>
    </citation>
    <scope>NUCLEOTIDE SEQUENCE [LARGE SCALE MRNA]</scope>
    <source>
        <strain>cv. Columbia</strain>
    </source>
</reference>
<reference key="5">
    <citation type="journal article" date="2003" name="J. Mol. Evol.">
        <title>The carboxylesterase gene family from Arabidopsis thaliana.</title>
        <authorList>
            <person name="Marshall S.D."/>
            <person name="Putterill J.J."/>
            <person name="Plummer K.M."/>
            <person name="Newcomb R.D."/>
        </authorList>
    </citation>
    <scope>TISSUE SPECIFICITY</scope>
    <scope>GENE FAMILY</scope>
</reference>
<reference key="6">
    <citation type="journal article" date="2006" name="Plant Cell">
        <title>Genetic characterization and functional analysis of the GID1 gibberellin receptors in Arabidopsis.</title>
        <authorList>
            <person name="Griffiths J."/>
            <person name="Murase K."/>
            <person name="Rieu I."/>
            <person name="Zentella R."/>
            <person name="Zhang Z.L."/>
            <person name="Powers S.J."/>
            <person name="Gong F."/>
            <person name="Phillips A.L."/>
            <person name="Hedden P."/>
            <person name="Sun T.P."/>
            <person name="Thomas S.G."/>
        </authorList>
    </citation>
    <scope>FUNCTION</scope>
    <scope>INTERACTION WITH GAI AND RGA</scope>
    <scope>DISRUPTION PHENOTYPE</scope>
</reference>
<reference key="7">
    <citation type="journal article" date="2006" name="Plant J.">
        <title>Identification and characterization of Arabidopsis gibberellin receptors.</title>
        <authorList>
            <person name="Nakajima M."/>
            <person name="Shimada A."/>
            <person name="Takashi Y."/>
            <person name="Kim Y.C."/>
            <person name="Park S.H."/>
            <person name="Ueguchi-Tanaka M."/>
            <person name="Suzuki H."/>
            <person name="Katoh E."/>
            <person name="Iuchi S."/>
            <person name="Kobayashi M."/>
            <person name="Maeda T."/>
            <person name="Matsuoka M."/>
            <person name="Yamaguchi I."/>
        </authorList>
    </citation>
    <scope>FUNCTION</scope>
    <scope>INTERACTION WITH GAI; RGA; RGL1; RGL2 AND RGL3</scope>
</reference>
<reference key="8">
    <citation type="journal article" date="2007" name="Plant J.">
        <title>Multiple loss-of-function of Arabidopsis gibberellin receptor AtGID1s completely shuts down a gibberellin signal.</title>
        <authorList>
            <person name="Iuchi S."/>
            <person name="Suzuki H."/>
            <person name="Kim Y.C."/>
            <person name="Iuchi A."/>
            <person name="Kuromori T."/>
            <person name="Ueguchi-Tanaka M."/>
            <person name="Asami T."/>
            <person name="Yamaguchi I."/>
            <person name="Matsuoka M."/>
            <person name="Kobayashi M."/>
            <person name="Nakajima M."/>
        </authorList>
    </citation>
    <scope>FUNCTION</scope>
    <scope>DISRUPTION PHENOTYPE</scope>
</reference>
<reference key="9">
    <citation type="journal article" date="2009" name="Plant J.">
        <title>Differential expression and affinities of Arabidopsis gibberellin receptors can explain variation in phenotypes of multiple knock-out mutants.</title>
        <authorList>
            <person name="Suzuki H."/>
            <person name="Park S.-H."/>
            <person name="Okubo K."/>
            <person name="Kitamura J."/>
            <person name="Ueguchi-Tanaka M."/>
            <person name="Iuchi S."/>
            <person name="Katoh E."/>
            <person name="Kobayashi M."/>
            <person name="Yamaguchi I."/>
            <person name="Matsuoka M."/>
            <person name="Asami T."/>
            <person name="Nakajima M."/>
        </authorList>
    </citation>
    <scope>INTERACTION WITH RGL2</scope>
</reference>
<evidence type="ECO:0000250" key="1"/>
<evidence type="ECO:0000250" key="2">
    <source>
        <dbReference type="UniProtKB" id="Q0ZPV7"/>
    </source>
</evidence>
<evidence type="ECO:0000250" key="3">
    <source>
        <dbReference type="UniProtKB" id="Q5NUF3"/>
    </source>
</evidence>
<evidence type="ECO:0000250" key="4">
    <source>
        <dbReference type="UniProtKB" id="Q9LT10"/>
    </source>
</evidence>
<evidence type="ECO:0000250" key="5">
    <source>
        <dbReference type="UniProtKB" id="Q9MAA7"/>
    </source>
</evidence>
<evidence type="ECO:0000255" key="6">
    <source>
        <dbReference type="PROSITE-ProRule" id="PRU10038"/>
    </source>
</evidence>
<evidence type="ECO:0000269" key="7">
    <source>
    </source>
</evidence>
<evidence type="ECO:0000269" key="8">
    <source>
    </source>
</evidence>
<evidence type="ECO:0000269" key="9">
    <source>
    </source>
</evidence>
<evidence type="ECO:0000269" key="10">
    <source>
    </source>
</evidence>
<evidence type="ECO:0000269" key="11">
    <source>
    </source>
</evidence>
<evidence type="ECO:0000305" key="12"/>
<proteinExistence type="evidence at protein level"/>
<name>GID1B_ARATH</name>
<protein>
    <recommendedName>
        <fullName>Gibberellin receptor GID1B</fullName>
        <ecNumber>3.-.-.-</ecNumber>
    </recommendedName>
    <alternativeName>
        <fullName>AtCXE14</fullName>
    </alternativeName>
    <alternativeName>
        <fullName>Carboxylesterase 14</fullName>
    </alternativeName>
    <alternativeName>
        <fullName>GID1-like protein 2</fullName>
    </alternativeName>
    <alternativeName>
        <fullName>Protein GA INSENSITIVE DWARF 1B</fullName>
        <shortName>AtGID1B</shortName>
    </alternativeName>
</protein>
<sequence length="358" mass="40300">MAGGNEVNLNECKRIVPLNTWVLISNFKLAYKVLRRPDGSFNRDLAEFLDRKVPANSFPLDGVFSFDHVDSTTNLLTRIYQPASLLHQTRHGTLELTKPLSTTEIVPVLIFFHGGSFTHSSANSAIYDTFCRRLVTICGVVVVSVDYRRSPEHRYPCAYDDGWNALNWVKSRVWLQSGKDSNVYVYLAGDSSGGNIAHNVAVRATNEGVKVLGNILLHPMFGGQERTQSEKTLDGKYFVTIQDRDWYWRAYLPEGEDRDHPACNPFGPRGQSLKGVNFPKSLVVVAGLDLVQDWQLAYVDGLKKTGLEVNLLYLKQATIGFYFLPNNDHFHCLMEELNKFVHSIEDSQSKSSPVLLTP</sequence>
<accession>Q9LYC1</accession>
<accession>Q0WRW2</accession>
<organism>
    <name type="scientific">Arabidopsis thaliana</name>
    <name type="common">Mouse-ear cress</name>
    <dbReference type="NCBI Taxonomy" id="3702"/>
    <lineage>
        <taxon>Eukaryota</taxon>
        <taxon>Viridiplantae</taxon>
        <taxon>Streptophyta</taxon>
        <taxon>Embryophyta</taxon>
        <taxon>Tracheophyta</taxon>
        <taxon>Spermatophyta</taxon>
        <taxon>Magnoliopsida</taxon>
        <taxon>eudicotyledons</taxon>
        <taxon>Gunneridae</taxon>
        <taxon>Pentapetalae</taxon>
        <taxon>rosids</taxon>
        <taxon>malvids</taxon>
        <taxon>Brassicales</taxon>
        <taxon>Brassicaceae</taxon>
        <taxon>Camelineae</taxon>
        <taxon>Arabidopsis</taxon>
    </lineage>
</organism>
<gene>
    <name type="primary">GID1B</name>
    <name type="synonym">CXE14</name>
    <name type="synonym">GID1L2</name>
    <name type="ordered locus">At3g63010</name>
    <name type="ORF">T20O10.110</name>
</gene>
<keyword id="KW-0007">Acetylation</keyword>
<keyword id="KW-0939">Gibberellin signaling pathway</keyword>
<keyword id="KW-0378">Hydrolase</keyword>
<keyword id="KW-0539">Nucleus</keyword>
<keyword id="KW-0675">Receptor</keyword>
<keyword id="KW-1185">Reference proteome</keyword>
<comment type="function">
    <text evidence="8 9 10">Functions as a soluble gibberellin (GA) receptor. GA is an essential hormone that regulates growth and development in plants. Binds with high affinity the biologically active gibberellin GA4, but has no affinity for the biologically inactive GAs. In response to GA, interacts with specific DELLA proteins, known as repressors of GA-induced growth, and targets them for degradation via proteasome. Seems to be required for GA signaling that controls root growth, seed germination and flower development. May function as a dominant GA receptor at low GA concentrations in germination. Partially redundant with GID1A and GID1C.</text>
</comment>
<comment type="subunit">
    <text evidence="8 9 11">Interacts with the DELLA proteins GAI, RGA, RGL1, RGL2 and RGL3 in a GA-dependent manner.</text>
</comment>
<comment type="interaction">
    <interactant intactId="EBI-963686">
        <id>Q9LYC1</id>
    </interactant>
    <interactant intactId="EBI-25529828">
        <id>Q9M872</id>
        <label>At3g02700/F16B3_33</label>
    </interactant>
    <organismsDiffer>false</organismsDiffer>
    <experiments>3</experiments>
</comment>
<comment type="interaction">
    <interactant intactId="EBI-963686">
        <id>Q9LYC1</id>
    </interactant>
    <interactant intactId="EBI-25529855">
        <id>A0A178V0E5</id>
        <label>At4g16447</label>
    </interactant>
    <organismsDiffer>false</organismsDiffer>
    <experiments>3</experiments>
</comment>
<comment type="interaction">
    <interactant intactId="EBI-963686">
        <id>Q9LYC1</id>
    </interactant>
    <interactant intactId="EBI-3387100">
        <id>Q9FMT4</id>
        <label>At5g14170</label>
    </interactant>
    <organismsDiffer>false</organismsDiffer>
    <experiments>3</experiments>
</comment>
<comment type="interaction">
    <interactant intactId="EBI-963686">
        <id>Q9LYC1</id>
    </interactant>
    <interactant intactId="EBI-697501">
        <id>Q9FVU9</id>
        <label>CSN5B</label>
    </interactant>
    <organismsDiffer>false</organismsDiffer>
    <experiments>3</experiments>
</comment>
<comment type="interaction">
    <interactant intactId="EBI-963686">
        <id>Q9LYC1</id>
    </interactant>
    <interactant intactId="EBI-25520038">
        <id>O64688</id>
        <label>E1-BETA-2</label>
    </interactant>
    <organismsDiffer>false</organismsDiffer>
    <experiments>3</experiments>
</comment>
<comment type="interaction">
    <interactant intactId="EBI-963686">
        <id>Q9LYC1</id>
    </interactant>
    <interactant intactId="EBI-4428777">
        <id>Q9S7U7</id>
        <label>F28J7.1</label>
    </interactant>
    <organismsDiffer>false</organismsDiffer>
    <experiments>3</experiments>
</comment>
<comment type="interaction">
    <interactant intactId="EBI-963686">
        <id>Q9LYC1</id>
    </interactant>
    <interactant intactId="EBI-963606">
        <id>Q9LQT8</id>
        <label>GAI</label>
    </interactant>
    <organismsDiffer>false</organismsDiffer>
    <experiments>8</experiments>
</comment>
<comment type="interaction">
    <interactant intactId="EBI-963686">
        <id>Q9LYC1</id>
    </interactant>
    <interactant intactId="EBI-619033">
        <id>Q9STX3</id>
        <label>GID2</label>
    </interactant>
    <organismsDiffer>false</organismsDiffer>
    <experiments>3</experiments>
</comment>
<comment type="interaction">
    <interactant intactId="EBI-963686">
        <id>Q9LYC1</id>
    </interactant>
    <interactant intactId="EBI-4434651">
        <id>Q8LF89</id>
        <label>GRXC8</label>
    </interactant>
    <organismsDiffer>false</organismsDiffer>
    <experiments>3</experiments>
</comment>
<comment type="interaction">
    <interactant intactId="EBI-963686">
        <id>Q9LYC1</id>
    </interactant>
    <interactant intactId="EBI-25529686">
        <id>Q9SG92</id>
        <label>MES17</label>
    </interactant>
    <organismsDiffer>false</organismsDiffer>
    <experiments>3</experiments>
</comment>
<comment type="interaction">
    <interactant intactId="EBI-963686">
        <id>Q9LYC1</id>
    </interactant>
    <interactant intactId="EBI-4436231">
        <id>Q9C6Z3</id>
        <label>PDH-E1 BETA</label>
    </interactant>
    <organismsDiffer>false</organismsDiffer>
    <experiments>3</experiments>
</comment>
<comment type="interaction">
    <interactant intactId="EBI-963686">
        <id>Q9LYC1</id>
    </interactant>
    <interactant intactId="EBI-963624">
        <id>Q9SLH3</id>
        <label>RGA</label>
    </interactant>
    <organismsDiffer>false</organismsDiffer>
    <experiments>13</experiments>
</comment>
<comment type="interaction">
    <interactant intactId="EBI-963686">
        <id>Q9LYC1</id>
    </interactant>
    <interactant intactId="EBI-963647">
        <id>Q9C8Y3</id>
        <label>RGL1</label>
    </interactant>
    <organismsDiffer>false</organismsDiffer>
    <experiments>6</experiments>
</comment>
<comment type="interaction">
    <interactant intactId="EBI-963686">
        <id>Q9LYC1</id>
    </interactant>
    <interactant intactId="EBI-963665">
        <id>Q8GXW1</id>
        <label>RGL2</label>
    </interactant>
    <organismsDiffer>false</organismsDiffer>
    <experiments>5</experiments>
</comment>
<comment type="interaction">
    <interactant intactId="EBI-963686">
        <id>Q9LYC1</id>
    </interactant>
    <interactant intactId="EBI-15681313">
        <id>Q9LF53</id>
        <label>RGL3</label>
    </interactant>
    <organismsDiffer>false</organismsDiffer>
    <experiments>4</experiments>
</comment>
<comment type="subcellular location">
    <subcellularLocation>
        <location evidence="1">Nucleus</location>
    </subcellularLocation>
</comment>
<comment type="tissue specificity">
    <text evidence="7">Widely expressed.</text>
</comment>
<comment type="disruption phenotype">
    <text evidence="9 10">No visible phenotype under normal growth condition.</text>
</comment>
<comment type="similarity">
    <text evidence="12">Belongs to the 'GDXG' lipolytic enzyme family.</text>
</comment>
<feature type="initiator methionine" description="Removed" evidence="4">
    <location>
        <position position="1"/>
    </location>
</feature>
<feature type="chain" id="PRO_0000071559" description="Gibberellin receptor GID1B">
    <location>
        <begin position="2"/>
        <end position="358"/>
    </location>
</feature>
<feature type="short sequence motif" description="Involved in the stabilization of the negatively charged intermediate by the formation of the oxyanion hole" evidence="3">
    <location>
        <begin position="113"/>
        <end position="115"/>
    </location>
</feature>
<feature type="active site" evidence="2 6">
    <location>
        <position position="191"/>
    </location>
</feature>
<feature type="active site" evidence="2 6">
    <location>
        <position position="289"/>
    </location>
</feature>
<feature type="binding site" evidence="5">
    <location>
        <begin position="115"/>
        <end position="116"/>
    </location>
    <ligand>
        <name>gibberellin A4</name>
        <dbReference type="ChEBI" id="CHEBI:73251"/>
    </ligand>
</feature>
<feature type="binding site" evidence="5">
    <location>
        <position position="116"/>
    </location>
    <ligand>
        <name>gibberellin A3</name>
        <dbReference type="ChEBI" id="CHEBI:58590"/>
    </ligand>
</feature>
<feature type="binding site" evidence="5">
    <location>
        <position position="127"/>
    </location>
    <ligand>
        <name>gibberellin A3</name>
        <dbReference type="ChEBI" id="CHEBI:58590"/>
    </ligand>
</feature>
<feature type="binding site" evidence="5">
    <location>
        <position position="127"/>
    </location>
    <ligand>
        <name>gibberellin A4</name>
        <dbReference type="ChEBI" id="CHEBI:73251"/>
    </ligand>
</feature>
<feature type="binding site" evidence="5">
    <location>
        <position position="191"/>
    </location>
    <ligand>
        <name>gibberellin A3</name>
        <dbReference type="ChEBI" id="CHEBI:58590"/>
    </ligand>
</feature>
<feature type="binding site" evidence="5">
    <location>
        <position position="191"/>
    </location>
    <ligand>
        <name>gibberellin A4</name>
        <dbReference type="ChEBI" id="CHEBI:73251"/>
    </ligand>
</feature>
<feature type="binding site" evidence="5">
    <location>
        <position position="238"/>
    </location>
    <ligand>
        <name>gibberellin A3</name>
        <dbReference type="ChEBI" id="CHEBI:58590"/>
    </ligand>
</feature>
<feature type="binding site" evidence="5">
    <location>
        <position position="320"/>
    </location>
    <ligand>
        <name>gibberellin A3</name>
        <dbReference type="ChEBI" id="CHEBI:58590"/>
    </ligand>
</feature>
<feature type="binding site" evidence="5">
    <location>
        <position position="320"/>
    </location>
    <ligand>
        <name>gibberellin A4</name>
        <dbReference type="ChEBI" id="CHEBI:73251"/>
    </ligand>
</feature>
<feature type="modified residue" description="N-acetylalanine" evidence="4">
    <location>
        <position position="2"/>
    </location>
</feature>